<protein>
    <recommendedName>
        <fullName evidence="1">7-cyano-7-deazaguanine synthase</fullName>
        <ecNumber evidence="1">6.3.4.20</ecNumber>
    </recommendedName>
    <alternativeName>
        <fullName evidence="1">7-cyano-7-carbaguanine synthase</fullName>
    </alternativeName>
    <alternativeName>
        <fullName evidence="1">PreQ(0) synthase</fullName>
    </alternativeName>
    <alternativeName>
        <fullName evidence="1">Queuosine biosynthesis protein QueC</fullName>
    </alternativeName>
</protein>
<feature type="chain" id="PRO_0000336905" description="7-cyano-7-deazaguanine synthase">
    <location>
        <begin position="1"/>
        <end position="219"/>
    </location>
</feature>
<feature type="binding site" evidence="1">
    <location>
        <begin position="10"/>
        <end position="20"/>
    </location>
    <ligand>
        <name>ATP</name>
        <dbReference type="ChEBI" id="CHEBI:30616"/>
    </ligand>
</feature>
<feature type="binding site" evidence="1">
    <location>
        <position position="188"/>
    </location>
    <ligand>
        <name>Zn(2+)</name>
        <dbReference type="ChEBI" id="CHEBI:29105"/>
    </ligand>
</feature>
<feature type="binding site" evidence="1">
    <location>
        <position position="197"/>
    </location>
    <ligand>
        <name>Zn(2+)</name>
        <dbReference type="ChEBI" id="CHEBI:29105"/>
    </ligand>
</feature>
<feature type="binding site" evidence="1">
    <location>
        <position position="200"/>
    </location>
    <ligand>
        <name>Zn(2+)</name>
        <dbReference type="ChEBI" id="CHEBI:29105"/>
    </ligand>
</feature>
<feature type="binding site" evidence="1">
    <location>
        <position position="203"/>
    </location>
    <ligand>
        <name>Zn(2+)</name>
        <dbReference type="ChEBI" id="CHEBI:29105"/>
    </ligand>
</feature>
<evidence type="ECO:0000255" key="1">
    <source>
        <dbReference type="HAMAP-Rule" id="MF_01633"/>
    </source>
</evidence>
<gene>
    <name evidence="1" type="primary">queC</name>
    <name type="ordered locus">CLB_1578</name>
</gene>
<reference key="1">
    <citation type="journal article" date="2007" name="PLoS ONE">
        <title>Analysis of the neurotoxin complex genes in Clostridium botulinum A1-A4 and B1 strains: BoNT/A3, /Ba4 and /B1 clusters are located within plasmids.</title>
        <authorList>
            <person name="Smith T.J."/>
            <person name="Hill K.K."/>
            <person name="Foley B.T."/>
            <person name="Detter J.C."/>
            <person name="Munk A.C."/>
            <person name="Bruce D.C."/>
            <person name="Doggett N.A."/>
            <person name="Smith L.A."/>
            <person name="Marks J.D."/>
            <person name="Xie G."/>
            <person name="Brettin T.S."/>
        </authorList>
    </citation>
    <scope>NUCLEOTIDE SEQUENCE [LARGE SCALE GENOMIC DNA]</scope>
    <source>
        <strain>ATCC 19397 / Type A</strain>
    </source>
</reference>
<organism>
    <name type="scientific">Clostridium botulinum (strain ATCC 19397 / Type A)</name>
    <dbReference type="NCBI Taxonomy" id="441770"/>
    <lineage>
        <taxon>Bacteria</taxon>
        <taxon>Bacillati</taxon>
        <taxon>Bacillota</taxon>
        <taxon>Clostridia</taxon>
        <taxon>Eubacteriales</taxon>
        <taxon>Clostridiaceae</taxon>
        <taxon>Clostridium</taxon>
    </lineage>
</organism>
<keyword id="KW-0067">ATP-binding</keyword>
<keyword id="KW-0436">Ligase</keyword>
<keyword id="KW-0479">Metal-binding</keyword>
<keyword id="KW-0547">Nucleotide-binding</keyword>
<keyword id="KW-0671">Queuosine biosynthesis</keyword>
<keyword id="KW-0862">Zinc</keyword>
<accession>A7FU68</accession>
<proteinExistence type="inferred from homology"/>
<comment type="function">
    <text evidence="1">Catalyzes the ATP-dependent conversion of 7-carboxy-7-deazaguanine (CDG) to 7-cyano-7-deazaguanine (preQ(0)).</text>
</comment>
<comment type="catalytic activity">
    <reaction evidence="1">
        <text>7-carboxy-7-deazaguanine + NH4(+) + ATP = 7-cyano-7-deazaguanine + ADP + phosphate + H2O + H(+)</text>
        <dbReference type="Rhea" id="RHEA:27982"/>
        <dbReference type="ChEBI" id="CHEBI:15377"/>
        <dbReference type="ChEBI" id="CHEBI:15378"/>
        <dbReference type="ChEBI" id="CHEBI:28938"/>
        <dbReference type="ChEBI" id="CHEBI:30616"/>
        <dbReference type="ChEBI" id="CHEBI:43474"/>
        <dbReference type="ChEBI" id="CHEBI:45075"/>
        <dbReference type="ChEBI" id="CHEBI:61036"/>
        <dbReference type="ChEBI" id="CHEBI:456216"/>
        <dbReference type="EC" id="6.3.4.20"/>
    </reaction>
</comment>
<comment type="cofactor">
    <cofactor evidence="1">
        <name>Zn(2+)</name>
        <dbReference type="ChEBI" id="CHEBI:29105"/>
    </cofactor>
    <text evidence="1">Binds 1 zinc ion per subunit.</text>
</comment>
<comment type="pathway">
    <text evidence="1">Purine metabolism; 7-cyano-7-deazaguanine biosynthesis.</text>
</comment>
<comment type="subunit">
    <text evidence="1">Homodimer.</text>
</comment>
<comment type="similarity">
    <text evidence="1">Belongs to the QueC family.</text>
</comment>
<sequence length="219" mass="24950">MNKEKAIVVFSGGQDSTTCLFWAKKKYKEVIAVSFDYNQKHKLELDCAKDICKKYNIEHHILDLNLLNQLAPNSLTRQDITVDKSAPKEGVPNSFVDGRNLLFLSFVAVFAKQKGINTIITGVSQSDFSGYPDCRDVFIKSLNVTLNLAMDYEFEIITPLMWINKAETWKMAYDLGVLDIVKEETLTCYNGIKADGCGECPACKLRKKGYWEFEKEYLK</sequence>
<dbReference type="EC" id="6.3.4.20" evidence="1"/>
<dbReference type="EMBL" id="CP000726">
    <property type="protein sequence ID" value="ABS35435.1"/>
    <property type="molecule type" value="Genomic_DNA"/>
</dbReference>
<dbReference type="RefSeq" id="WP_011949102.1">
    <property type="nucleotide sequence ID" value="NC_009697.1"/>
</dbReference>
<dbReference type="SMR" id="A7FU68"/>
<dbReference type="GeneID" id="5185812"/>
<dbReference type="KEGG" id="cba:CLB_1578"/>
<dbReference type="HOGENOM" id="CLU_081854_0_0_9"/>
<dbReference type="UniPathway" id="UPA00391"/>
<dbReference type="GO" id="GO:0005524">
    <property type="term" value="F:ATP binding"/>
    <property type="evidence" value="ECO:0007669"/>
    <property type="project" value="UniProtKB-UniRule"/>
</dbReference>
<dbReference type="GO" id="GO:0016879">
    <property type="term" value="F:ligase activity, forming carbon-nitrogen bonds"/>
    <property type="evidence" value="ECO:0007669"/>
    <property type="project" value="UniProtKB-UniRule"/>
</dbReference>
<dbReference type="GO" id="GO:0008270">
    <property type="term" value="F:zinc ion binding"/>
    <property type="evidence" value="ECO:0007669"/>
    <property type="project" value="UniProtKB-UniRule"/>
</dbReference>
<dbReference type="GO" id="GO:0008616">
    <property type="term" value="P:queuosine biosynthetic process"/>
    <property type="evidence" value="ECO:0007669"/>
    <property type="project" value="UniProtKB-UniRule"/>
</dbReference>
<dbReference type="CDD" id="cd01995">
    <property type="entry name" value="QueC-like"/>
    <property type="match status" value="1"/>
</dbReference>
<dbReference type="FunFam" id="3.40.50.620:FF:000017">
    <property type="entry name" value="7-cyano-7-deazaguanine synthase"/>
    <property type="match status" value="1"/>
</dbReference>
<dbReference type="Gene3D" id="3.40.50.620">
    <property type="entry name" value="HUPs"/>
    <property type="match status" value="1"/>
</dbReference>
<dbReference type="HAMAP" id="MF_01633">
    <property type="entry name" value="QueC"/>
    <property type="match status" value="1"/>
</dbReference>
<dbReference type="InterPro" id="IPR018317">
    <property type="entry name" value="QueC"/>
</dbReference>
<dbReference type="InterPro" id="IPR014729">
    <property type="entry name" value="Rossmann-like_a/b/a_fold"/>
</dbReference>
<dbReference type="NCBIfam" id="TIGR00364">
    <property type="entry name" value="7-cyano-7-deazaguanine synthase QueC"/>
    <property type="match status" value="1"/>
</dbReference>
<dbReference type="PANTHER" id="PTHR42914">
    <property type="entry name" value="7-CYANO-7-DEAZAGUANINE SYNTHASE"/>
    <property type="match status" value="1"/>
</dbReference>
<dbReference type="PANTHER" id="PTHR42914:SF1">
    <property type="entry name" value="7-CYANO-7-DEAZAGUANINE SYNTHASE"/>
    <property type="match status" value="1"/>
</dbReference>
<dbReference type="Pfam" id="PF06508">
    <property type="entry name" value="QueC"/>
    <property type="match status" value="1"/>
</dbReference>
<dbReference type="PIRSF" id="PIRSF006293">
    <property type="entry name" value="ExsB"/>
    <property type="match status" value="1"/>
</dbReference>
<dbReference type="SUPFAM" id="SSF52402">
    <property type="entry name" value="Adenine nucleotide alpha hydrolases-like"/>
    <property type="match status" value="1"/>
</dbReference>
<name>QUEC_CLOB1</name>